<dbReference type="EC" id="1.14.99.60" evidence="1"/>
<dbReference type="EMBL" id="CP000437">
    <property type="protein sequence ID" value="ABI82869.1"/>
    <property type="molecule type" value="Genomic_DNA"/>
</dbReference>
<dbReference type="RefSeq" id="WP_003015834.1">
    <property type="nucleotide sequence ID" value="NC_017463.1"/>
</dbReference>
<dbReference type="SMR" id="Q0BM15"/>
<dbReference type="KEGG" id="fth:FTH_0968"/>
<dbReference type="UniPathway" id="UPA00232"/>
<dbReference type="GO" id="GO:0005886">
    <property type="term" value="C:plasma membrane"/>
    <property type="evidence" value="ECO:0007669"/>
    <property type="project" value="UniProtKB-SubCell"/>
</dbReference>
<dbReference type="GO" id="GO:0008682">
    <property type="term" value="F:3-demethoxyubiquinol 3-hydroxylase activity"/>
    <property type="evidence" value="ECO:0007669"/>
    <property type="project" value="UniProtKB-EC"/>
</dbReference>
<dbReference type="GO" id="GO:0046872">
    <property type="term" value="F:metal ion binding"/>
    <property type="evidence" value="ECO:0007669"/>
    <property type="project" value="UniProtKB-KW"/>
</dbReference>
<dbReference type="GO" id="GO:0006744">
    <property type="term" value="P:ubiquinone biosynthetic process"/>
    <property type="evidence" value="ECO:0007669"/>
    <property type="project" value="UniProtKB-UniRule"/>
</dbReference>
<dbReference type="CDD" id="cd01042">
    <property type="entry name" value="DMQH"/>
    <property type="match status" value="1"/>
</dbReference>
<dbReference type="Gene3D" id="1.20.1260.10">
    <property type="match status" value="1"/>
</dbReference>
<dbReference type="HAMAP" id="MF_01658">
    <property type="entry name" value="COQ7"/>
    <property type="match status" value="1"/>
</dbReference>
<dbReference type="InterPro" id="IPR047809">
    <property type="entry name" value="COQ7_proteobact"/>
</dbReference>
<dbReference type="InterPro" id="IPR012347">
    <property type="entry name" value="Ferritin-like"/>
</dbReference>
<dbReference type="InterPro" id="IPR009078">
    <property type="entry name" value="Ferritin-like_SF"/>
</dbReference>
<dbReference type="InterPro" id="IPR011566">
    <property type="entry name" value="Ubq_synth_Coq7"/>
</dbReference>
<dbReference type="NCBIfam" id="NF033656">
    <property type="entry name" value="DMQ_monoox_COQ7"/>
    <property type="match status" value="1"/>
</dbReference>
<dbReference type="PANTHER" id="PTHR11237:SF4">
    <property type="entry name" value="5-DEMETHOXYUBIQUINONE HYDROXYLASE, MITOCHONDRIAL"/>
    <property type="match status" value="1"/>
</dbReference>
<dbReference type="PANTHER" id="PTHR11237">
    <property type="entry name" value="COENZYME Q10 BIOSYNTHESIS PROTEIN 7"/>
    <property type="match status" value="1"/>
</dbReference>
<dbReference type="Pfam" id="PF03232">
    <property type="entry name" value="COQ7"/>
    <property type="match status" value="1"/>
</dbReference>
<dbReference type="SUPFAM" id="SSF47240">
    <property type="entry name" value="Ferritin-like"/>
    <property type="match status" value="1"/>
</dbReference>
<accession>Q0BM15</accession>
<protein>
    <recommendedName>
        <fullName evidence="1">3-demethoxyubiquinol 3-hydroxylase</fullName>
        <shortName evidence="1">DMQ hydroxylase</shortName>
        <ecNumber evidence="1">1.14.99.60</ecNumber>
    </recommendedName>
    <alternativeName>
        <fullName evidence="1">2-nonaprenyl-3-methyl-6-methoxy-1,4-benzoquinol hydroxylase</fullName>
    </alternativeName>
</protein>
<evidence type="ECO:0000255" key="1">
    <source>
        <dbReference type="HAMAP-Rule" id="MF_01658"/>
    </source>
</evidence>
<feature type="chain" id="PRO_0000338686" description="3-demethoxyubiquinol 3-hydroxylase">
    <location>
        <begin position="1"/>
        <end position="211"/>
    </location>
</feature>
<feature type="binding site" evidence="1">
    <location>
        <position position="60"/>
    </location>
    <ligand>
        <name>Fe cation</name>
        <dbReference type="ChEBI" id="CHEBI:24875"/>
        <label>1</label>
    </ligand>
</feature>
<feature type="binding site" evidence="1">
    <location>
        <position position="90"/>
    </location>
    <ligand>
        <name>Fe cation</name>
        <dbReference type="ChEBI" id="CHEBI:24875"/>
        <label>1</label>
    </ligand>
</feature>
<feature type="binding site" evidence="1">
    <location>
        <position position="90"/>
    </location>
    <ligand>
        <name>Fe cation</name>
        <dbReference type="ChEBI" id="CHEBI:24875"/>
        <label>2</label>
    </ligand>
</feature>
<feature type="binding site" evidence="1">
    <location>
        <position position="93"/>
    </location>
    <ligand>
        <name>Fe cation</name>
        <dbReference type="ChEBI" id="CHEBI:24875"/>
        <label>1</label>
    </ligand>
</feature>
<feature type="binding site" evidence="1">
    <location>
        <position position="142"/>
    </location>
    <ligand>
        <name>Fe cation</name>
        <dbReference type="ChEBI" id="CHEBI:24875"/>
        <label>2</label>
    </ligand>
</feature>
<feature type="binding site" evidence="1">
    <location>
        <position position="174"/>
    </location>
    <ligand>
        <name>Fe cation</name>
        <dbReference type="ChEBI" id="CHEBI:24875"/>
        <label>1</label>
    </ligand>
</feature>
<feature type="binding site" evidence="1">
    <location>
        <position position="174"/>
    </location>
    <ligand>
        <name>Fe cation</name>
        <dbReference type="ChEBI" id="CHEBI:24875"/>
        <label>2</label>
    </ligand>
</feature>
<feature type="binding site" evidence="1">
    <location>
        <position position="177"/>
    </location>
    <ligand>
        <name>Fe cation</name>
        <dbReference type="ChEBI" id="CHEBI:24875"/>
        <label>2</label>
    </ligand>
</feature>
<sequence length="211" mass="23816">MRKLSFLDRVIEELDSYARFTKVPLNPSKKSPSSDTIDGKLFEIEKKHSAGLMRVDYTGEICAQGLYRGQASVAKSPQTKEHLYHAAAEEYDHLAWCGERLQELGARPSLLNPFWYWTSFGIGAVAGSISDSLSYGFVVETEKQVMKHIDSHLKSLPVNDNRSREILKQMYIDESEHAVEAEKAGGKKLPKTVKAIMKLQSKVMTTLAYRF</sequence>
<organism>
    <name type="scientific">Francisella tularensis subsp. holarctica (strain OSU18)</name>
    <dbReference type="NCBI Taxonomy" id="393011"/>
    <lineage>
        <taxon>Bacteria</taxon>
        <taxon>Pseudomonadati</taxon>
        <taxon>Pseudomonadota</taxon>
        <taxon>Gammaproteobacteria</taxon>
        <taxon>Thiotrichales</taxon>
        <taxon>Francisellaceae</taxon>
        <taxon>Francisella</taxon>
    </lineage>
</organism>
<reference key="1">
    <citation type="journal article" date="2006" name="J. Bacteriol.">
        <title>Chromosome rearrangement and diversification of Francisella tularensis revealed by the type B (OSU18) genome sequence.</title>
        <authorList>
            <person name="Petrosino J.F."/>
            <person name="Xiang Q."/>
            <person name="Karpathy S.E."/>
            <person name="Jiang H."/>
            <person name="Yerrapragada S."/>
            <person name="Liu Y."/>
            <person name="Gioia J."/>
            <person name="Hemphill L."/>
            <person name="Gonzalez A."/>
            <person name="Raghavan T.M."/>
            <person name="Uzman A."/>
            <person name="Fox G.E."/>
            <person name="Highlander S."/>
            <person name="Reichard M."/>
            <person name="Morton R.J."/>
            <person name="Clinkenbeard K.D."/>
            <person name="Weinstock G.M."/>
        </authorList>
    </citation>
    <scope>NUCLEOTIDE SEQUENCE [LARGE SCALE GENOMIC DNA]</scope>
    <source>
        <strain>OSU18</strain>
    </source>
</reference>
<keyword id="KW-1003">Cell membrane</keyword>
<keyword id="KW-0408">Iron</keyword>
<keyword id="KW-0472">Membrane</keyword>
<keyword id="KW-0479">Metal-binding</keyword>
<keyword id="KW-0503">Monooxygenase</keyword>
<keyword id="KW-0560">Oxidoreductase</keyword>
<keyword id="KW-0831">Ubiquinone biosynthesis</keyword>
<comment type="function">
    <text evidence="1">Catalyzes the hydroxylation of 2-nonaprenyl-3-methyl-6-methoxy-1,4-benzoquinol during ubiquinone biosynthesis.</text>
</comment>
<comment type="catalytic activity">
    <reaction evidence="1">
        <text>a 5-methoxy-2-methyl-3-(all-trans-polyprenyl)benzene-1,4-diol + AH2 + O2 = a 3-demethylubiquinol + A + H2O</text>
        <dbReference type="Rhea" id="RHEA:50908"/>
        <dbReference type="Rhea" id="RHEA-COMP:10859"/>
        <dbReference type="Rhea" id="RHEA-COMP:10914"/>
        <dbReference type="ChEBI" id="CHEBI:13193"/>
        <dbReference type="ChEBI" id="CHEBI:15377"/>
        <dbReference type="ChEBI" id="CHEBI:15379"/>
        <dbReference type="ChEBI" id="CHEBI:17499"/>
        <dbReference type="ChEBI" id="CHEBI:84167"/>
        <dbReference type="ChEBI" id="CHEBI:84422"/>
        <dbReference type="EC" id="1.14.99.60"/>
    </reaction>
</comment>
<comment type="cofactor">
    <cofactor evidence="1">
        <name>Fe cation</name>
        <dbReference type="ChEBI" id="CHEBI:24875"/>
    </cofactor>
    <text evidence="1">Binds 2 iron ions per subunit.</text>
</comment>
<comment type="pathway">
    <text evidence="1">Cofactor biosynthesis; ubiquinone biosynthesis.</text>
</comment>
<comment type="subcellular location">
    <subcellularLocation>
        <location evidence="1">Cell membrane</location>
        <topology evidence="1">Peripheral membrane protein</topology>
    </subcellularLocation>
</comment>
<comment type="similarity">
    <text evidence="1">Belongs to the COQ7 family.</text>
</comment>
<gene>
    <name evidence="1" type="primary">coq7</name>
    <name type="ordered locus">FTH_0968</name>
</gene>
<proteinExistence type="inferred from homology"/>
<name>COQ7_FRATO</name>